<keyword id="KW-0030">Aminoacyl-tRNA synthetase</keyword>
<keyword id="KW-0067">ATP-binding</keyword>
<keyword id="KW-0963">Cytoplasm</keyword>
<keyword id="KW-0436">Ligase</keyword>
<keyword id="KW-0547">Nucleotide-binding</keyword>
<keyword id="KW-0648">Protein biosynthesis</keyword>
<evidence type="ECO:0000255" key="1">
    <source>
        <dbReference type="HAMAP-Rule" id="MF_00176"/>
    </source>
</evidence>
<sequence length="426" mass="46988">MLDSKLLRSNLQDVADRLASRGFALDVARIEALEEQRKTVQTRTEALQAERNARSKSIGQAKQRGEDIAPLMADVERMAGELSAGKVELEAIQTELDSILLGIPNLPHESVPVGEDEDGNVEVRRWGTPTAFDFPVQDHVALGEKFGWLDFETAAKLSGARFALLRGPIARLHRALAQFMINLHVTEHGYEEAYTPYLVQAPALQGTGQLPKFEEDLFKIAREGEADLYLIPTAEVSLTNIVAGEIVDSKQLPIKFVAHTPCFRSEAGASGRDTRGMIRQHQFDKVEMVQIVEPSKSMEALESLTANAEKVLQLLGLPYRTLALCTGDMGFSAVKTYDLEVWIPSQDKYREISSCSNCGDFQARRMQARFRNPETGKPELVHTLNGSGLAVGRTLVAVLENYQQADGSIRVPDVLKPYMGGLEVIG</sequence>
<comment type="function">
    <text evidence="1">Catalyzes the attachment of serine to tRNA(Ser). Is also able to aminoacylate tRNA(Sec) with serine, to form the misacylated tRNA L-seryl-tRNA(Sec), which will be further converted into selenocysteinyl-tRNA(Sec).</text>
</comment>
<comment type="catalytic activity">
    <reaction evidence="1">
        <text>tRNA(Ser) + L-serine + ATP = L-seryl-tRNA(Ser) + AMP + diphosphate + H(+)</text>
        <dbReference type="Rhea" id="RHEA:12292"/>
        <dbReference type="Rhea" id="RHEA-COMP:9669"/>
        <dbReference type="Rhea" id="RHEA-COMP:9703"/>
        <dbReference type="ChEBI" id="CHEBI:15378"/>
        <dbReference type="ChEBI" id="CHEBI:30616"/>
        <dbReference type="ChEBI" id="CHEBI:33019"/>
        <dbReference type="ChEBI" id="CHEBI:33384"/>
        <dbReference type="ChEBI" id="CHEBI:78442"/>
        <dbReference type="ChEBI" id="CHEBI:78533"/>
        <dbReference type="ChEBI" id="CHEBI:456215"/>
        <dbReference type="EC" id="6.1.1.11"/>
    </reaction>
</comment>
<comment type="catalytic activity">
    <reaction evidence="1">
        <text>tRNA(Sec) + L-serine + ATP = L-seryl-tRNA(Sec) + AMP + diphosphate + H(+)</text>
        <dbReference type="Rhea" id="RHEA:42580"/>
        <dbReference type="Rhea" id="RHEA-COMP:9742"/>
        <dbReference type="Rhea" id="RHEA-COMP:10128"/>
        <dbReference type="ChEBI" id="CHEBI:15378"/>
        <dbReference type="ChEBI" id="CHEBI:30616"/>
        <dbReference type="ChEBI" id="CHEBI:33019"/>
        <dbReference type="ChEBI" id="CHEBI:33384"/>
        <dbReference type="ChEBI" id="CHEBI:78442"/>
        <dbReference type="ChEBI" id="CHEBI:78533"/>
        <dbReference type="ChEBI" id="CHEBI:456215"/>
        <dbReference type="EC" id="6.1.1.11"/>
    </reaction>
</comment>
<comment type="pathway">
    <text evidence="1">Aminoacyl-tRNA biosynthesis; selenocysteinyl-tRNA(Sec) biosynthesis; L-seryl-tRNA(Sec) from L-serine and tRNA(Sec): step 1/1.</text>
</comment>
<comment type="subunit">
    <text evidence="1">Homodimer. The tRNA molecule binds across the dimer.</text>
</comment>
<comment type="subcellular location">
    <subcellularLocation>
        <location evidence="1">Cytoplasm</location>
    </subcellularLocation>
</comment>
<comment type="domain">
    <text evidence="1">Consists of two distinct domains, a catalytic core and a N-terminal extension that is involved in tRNA binding.</text>
</comment>
<comment type="similarity">
    <text evidence="1">Belongs to the class-II aminoacyl-tRNA synthetase family. Type-1 seryl-tRNA synthetase subfamily.</text>
</comment>
<name>SYS_PSEPF</name>
<organism>
    <name type="scientific">Pseudomonas fluorescens (strain Pf0-1)</name>
    <dbReference type="NCBI Taxonomy" id="205922"/>
    <lineage>
        <taxon>Bacteria</taxon>
        <taxon>Pseudomonadati</taxon>
        <taxon>Pseudomonadota</taxon>
        <taxon>Gammaproteobacteria</taxon>
        <taxon>Pseudomonadales</taxon>
        <taxon>Pseudomonadaceae</taxon>
        <taxon>Pseudomonas</taxon>
    </lineage>
</organism>
<proteinExistence type="inferred from homology"/>
<gene>
    <name evidence="1" type="primary">serS</name>
    <name type="ordered locus">Pfl01_3582</name>
</gene>
<dbReference type="EC" id="6.1.1.11" evidence="1"/>
<dbReference type="EMBL" id="CP000094">
    <property type="protein sequence ID" value="ABA75320.1"/>
    <property type="molecule type" value="Genomic_DNA"/>
</dbReference>
<dbReference type="RefSeq" id="WP_011334942.1">
    <property type="nucleotide sequence ID" value="NC_007492.2"/>
</dbReference>
<dbReference type="SMR" id="Q3KA84"/>
<dbReference type="KEGG" id="pfo:Pfl01_3582"/>
<dbReference type="eggNOG" id="COG0172">
    <property type="taxonomic scope" value="Bacteria"/>
</dbReference>
<dbReference type="HOGENOM" id="CLU_023797_1_1_6"/>
<dbReference type="UniPathway" id="UPA00906">
    <property type="reaction ID" value="UER00895"/>
</dbReference>
<dbReference type="Proteomes" id="UP000002704">
    <property type="component" value="Chromosome"/>
</dbReference>
<dbReference type="GO" id="GO:0005737">
    <property type="term" value="C:cytoplasm"/>
    <property type="evidence" value="ECO:0007669"/>
    <property type="project" value="UniProtKB-SubCell"/>
</dbReference>
<dbReference type="GO" id="GO:0005524">
    <property type="term" value="F:ATP binding"/>
    <property type="evidence" value="ECO:0007669"/>
    <property type="project" value="UniProtKB-UniRule"/>
</dbReference>
<dbReference type="GO" id="GO:0004828">
    <property type="term" value="F:serine-tRNA ligase activity"/>
    <property type="evidence" value="ECO:0007669"/>
    <property type="project" value="UniProtKB-UniRule"/>
</dbReference>
<dbReference type="GO" id="GO:0016260">
    <property type="term" value="P:selenocysteine biosynthetic process"/>
    <property type="evidence" value="ECO:0007669"/>
    <property type="project" value="UniProtKB-UniRule"/>
</dbReference>
<dbReference type="GO" id="GO:0006434">
    <property type="term" value="P:seryl-tRNA aminoacylation"/>
    <property type="evidence" value="ECO:0007669"/>
    <property type="project" value="UniProtKB-UniRule"/>
</dbReference>
<dbReference type="CDD" id="cd00770">
    <property type="entry name" value="SerRS_core"/>
    <property type="match status" value="1"/>
</dbReference>
<dbReference type="Gene3D" id="3.30.930.10">
    <property type="entry name" value="Bira Bifunctional Protein, Domain 2"/>
    <property type="match status" value="1"/>
</dbReference>
<dbReference type="Gene3D" id="1.10.287.40">
    <property type="entry name" value="Serine-tRNA synthetase, tRNA binding domain"/>
    <property type="match status" value="1"/>
</dbReference>
<dbReference type="HAMAP" id="MF_00176">
    <property type="entry name" value="Ser_tRNA_synth_type1"/>
    <property type="match status" value="1"/>
</dbReference>
<dbReference type="InterPro" id="IPR002314">
    <property type="entry name" value="aa-tRNA-synt_IIb"/>
</dbReference>
<dbReference type="InterPro" id="IPR006195">
    <property type="entry name" value="aa-tRNA-synth_II"/>
</dbReference>
<dbReference type="InterPro" id="IPR045864">
    <property type="entry name" value="aa-tRNA-synth_II/BPL/LPL"/>
</dbReference>
<dbReference type="InterPro" id="IPR002317">
    <property type="entry name" value="Ser-tRNA-ligase_type_1"/>
</dbReference>
<dbReference type="InterPro" id="IPR015866">
    <property type="entry name" value="Ser-tRNA-synth_1_N"/>
</dbReference>
<dbReference type="InterPro" id="IPR042103">
    <property type="entry name" value="SerRS_1_N_sf"/>
</dbReference>
<dbReference type="InterPro" id="IPR033729">
    <property type="entry name" value="SerRS_core"/>
</dbReference>
<dbReference type="InterPro" id="IPR010978">
    <property type="entry name" value="tRNA-bd_arm"/>
</dbReference>
<dbReference type="NCBIfam" id="TIGR00414">
    <property type="entry name" value="serS"/>
    <property type="match status" value="1"/>
</dbReference>
<dbReference type="PANTHER" id="PTHR43697:SF1">
    <property type="entry name" value="SERINE--TRNA LIGASE"/>
    <property type="match status" value="1"/>
</dbReference>
<dbReference type="PANTHER" id="PTHR43697">
    <property type="entry name" value="SERYL-TRNA SYNTHETASE"/>
    <property type="match status" value="1"/>
</dbReference>
<dbReference type="Pfam" id="PF02403">
    <property type="entry name" value="Seryl_tRNA_N"/>
    <property type="match status" value="1"/>
</dbReference>
<dbReference type="Pfam" id="PF00587">
    <property type="entry name" value="tRNA-synt_2b"/>
    <property type="match status" value="1"/>
</dbReference>
<dbReference type="PIRSF" id="PIRSF001529">
    <property type="entry name" value="Ser-tRNA-synth_IIa"/>
    <property type="match status" value="1"/>
</dbReference>
<dbReference type="PRINTS" id="PR00981">
    <property type="entry name" value="TRNASYNTHSER"/>
</dbReference>
<dbReference type="SUPFAM" id="SSF55681">
    <property type="entry name" value="Class II aaRS and biotin synthetases"/>
    <property type="match status" value="1"/>
</dbReference>
<dbReference type="SUPFAM" id="SSF46589">
    <property type="entry name" value="tRNA-binding arm"/>
    <property type="match status" value="1"/>
</dbReference>
<dbReference type="PROSITE" id="PS50862">
    <property type="entry name" value="AA_TRNA_LIGASE_II"/>
    <property type="match status" value="1"/>
</dbReference>
<reference key="1">
    <citation type="journal article" date="2009" name="Genome Biol.">
        <title>Genomic and genetic analyses of diversity and plant interactions of Pseudomonas fluorescens.</title>
        <authorList>
            <person name="Silby M.W."/>
            <person name="Cerdeno-Tarraga A.M."/>
            <person name="Vernikos G.S."/>
            <person name="Giddens S.R."/>
            <person name="Jackson R.W."/>
            <person name="Preston G.M."/>
            <person name="Zhang X.-X."/>
            <person name="Moon C.D."/>
            <person name="Gehrig S.M."/>
            <person name="Godfrey S.A.C."/>
            <person name="Knight C.G."/>
            <person name="Malone J.G."/>
            <person name="Robinson Z."/>
            <person name="Spiers A.J."/>
            <person name="Harris S."/>
            <person name="Challis G.L."/>
            <person name="Yaxley A.M."/>
            <person name="Harris D."/>
            <person name="Seeger K."/>
            <person name="Murphy L."/>
            <person name="Rutter S."/>
            <person name="Squares R."/>
            <person name="Quail M.A."/>
            <person name="Saunders E."/>
            <person name="Mavromatis K."/>
            <person name="Brettin T.S."/>
            <person name="Bentley S.D."/>
            <person name="Hothersall J."/>
            <person name="Stephens E."/>
            <person name="Thomas C.M."/>
            <person name="Parkhill J."/>
            <person name="Levy S.B."/>
            <person name="Rainey P.B."/>
            <person name="Thomson N.R."/>
        </authorList>
    </citation>
    <scope>NUCLEOTIDE SEQUENCE [LARGE SCALE GENOMIC DNA]</scope>
    <source>
        <strain>Pf0-1</strain>
    </source>
</reference>
<protein>
    <recommendedName>
        <fullName evidence="1">Serine--tRNA ligase</fullName>
        <ecNumber evidence="1">6.1.1.11</ecNumber>
    </recommendedName>
    <alternativeName>
        <fullName evidence="1">Seryl-tRNA synthetase</fullName>
        <shortName evidence="1">SerRS</shortName>
    </alternativeName>
    <alternativeName>
        <fullName evidence="1">Seryl-tRNA(Ser/Sec) synthetase</fullName>
    </alternativeName>
</protein>
<accession>Q3KA84</accession>
<feature type="chain" id="PRO_1000019779" description="Serine--tRNA ligase">
    <location>
        <begin position="1"/>
        <end position="426"/>
    </location>
</feature>
<feature type="binding site" evidence="1">
    <location>
        <begin position="233"/>
        <end position="235"/>
    </location>
    <ligand>
        <name>L-serine</name>
        <dbReference type="ChEBI" id="CHEBI:33384"/>
    </ligand>
</feature>
<feature type="binding site" evidence="1">
    <location>
        <begin position="264"/>
        <end position="266"/>
    </location>
    <ligand>
        <name>ATP</name>
        <dbReference type="ChEBI" id="CHEBI:30616"/>
    </ligand>
</feature>
<feature type="binding site" evidence="1">
    <location>
        <position position="287"/>
    </location>
    <ligand>
        <name>L-serine</name>
        <dbReference type="ChEBI" id="CHEBI:33384"/>
    </ligand>
</feature>
<feature type="binding site" evidence="1">
    <location>
        <begin position="351"/>
        <end position="354"/>
    </location>
    <ligand>
        <name>ATP</name>
        <dbReference type="ChEBI" id="CHEBI:30616"/>
    </ligand>
</feature>
<feature type="binding site" evidence="1">
    <location>
        <position position="387"/>
    </location>
    <ligand>
        <name>L-serine</name>
        <dbReference type="ChEBI" id="CHEBI:33384"/>
    </ligand>
</feature>